<feature type="chain" id="PRO_1000046010" description="Ribosomal protein L11 methyltransferase">
    <location>
        <begin position="1"/>
        <end position="312"/>
    </location>
</feature>
<feature type="binding site" evidence="1">
    <location>
        <position position="163"/>
    </location>
    <ligand>
        <name>S-adenosyl-L-methionine</name>
        <dbReference type="ChEBI" id="CHEBI:59789"/>
    </ligand>
</feature>
<feature type="binding site" evidence="1">
    <location>
        <position position="184"/>
    </location>
    <ligand>
        <name>S-adenosyl-L-methionine</name>
        <dbReference type="ChEBI" id="CHEBI:59789"/>
    </ligand>
</feature>
<feature type="binding site" evidence="1">
    <location>
        <position position="206"/>
    </location>
    <ligand>
        <name>S-adenosyl-L-methionine</name>
        <dbReference type="ChEBI" id="CHEBI:59789"/>
    </ligand>
</feature>
<feature type="binding site" evidence="1">
    <location>
        <position position="248"/>
    </location>
    <ligand>
        <name>S-adenosyl-L-methionine</name>
        <dbReference type="ChEBI" id="CHEBI:59789"/>
    </ligand>
</feature>
<keyword id="KW-0963">Cytoplasm</keyword>
<keyword id="KW-0489">Methyltransferase</keyword>
<keyword id="KW-1185">Reference proteome</keyword>
<keyword id="KW-0949">S-adenosyl-L-methionine</keyword>
<keyword id="KW-0808">Transferase</keyword>
<evidence type="ECO:0000255" key="1">
    <source>
        <dbReference type="HAMAP-Rule" id="MF_00735"/>
    </source>
</evidence>
<organism>
    <name type="scientific">Clostridium botulinum (strain Hall / ATCC 3502 / NCTC 13319 / Type A)</name>
    <dbReference type="NCBI Taxonomy" id="441771"/>
    <lineage>
        <taxon>Bacteria</taxon>
        <taxon>Bacillati</taxon>
        <taxon>Bacillota</taxon>
        <taxon>Clostridia</taxon>
        <taxon>Eubacteriales</taxon>
        <taxon>Clostridiaceae</taxon>
        <taxon>Clostridium</taxon>
    </lineage>
</organism>
<sequence length="312" mass="35337">MDKEWLEVCIYTSSEALEAISGILYNTGVKGVSIEDPKDIEFKRKHPGDWDYFDETLLKVKDTAIVKGYYKEDDKFNEYLDYIKKSVSNLDQFGIDKGEGLVEVHKVNEEDWENNWKKYYKPTKVSNKIVIKPIWENYDKKQEEIIVELDPGMAFGTGTHETTRMCINALEKYIKEDRTVFDIGCGSGILSIAAAKLGAKHVIGVDLDPVAVKSSKENIKYNNLDNIEILEGNLMEVVEGRANIVVANIIADVIIFLTEGVKAFIEKGGYFIASGIINSRKEDVIKKLEETGFIIEEVREEGEWACIVSKIN</sequence>
<gene>
    <name evidence="1" type="primary">prmA</name>
    <name type="ordered locus">CBO2957</name>
    <name type="ordered locus">CLC_2853</name>
</gene>
<proteinExistence type="inferred from homology"/>
<comment type="function">
    <text evidence="1">Methylates ribosomal protein L11.</text>
</comment>
<comment type="catalytic activity">
    <reaction evidence="1">
        <text>L-lysyl-[protein] + 3 S-adenosyl-L-methionine = N(6),N(6),N(6)-trimethyl-L-lysyl-[protein] + 3 S-adenosyl-L-homocysteine + 3 H(+)</text>
        <dbReference type="Rhea" id="RHEA:54192"/>
        <dbReference type="Rhea" id="RHEA-COMP:9752"/>
        <dbReference type="Rhea" id="RHEA-COMP:13826"/>
        <dbReference type="ChEBI" id="CHEBI:15378"/>
        <dbReference type="ChEBI" id="CHEBI:29969"/>
        <dbReference type="ChEBI" id="CHEBI:57856"/>
        <dbReference type="ChEBI" id="CHEBI:59789"/>
        <dbReference type="ChEBI" id="CHEBI:61961"/>
    </reaction>
</comment>
<comment type="subcellular location">
    <subcellularLocation>
        <location evidence="1">Cytoplasm</location>
    </subcellularLocation>
</comment>
<comment type="similarity">
    <text evidence="1">Belongs to the methyltransferase superfamily. PrmA family.</text>
</comment>
<protein>
    <recommendedName>
        <fullName evidence="1">Ribosomal protein L11 methyltransferase</fullName>
        <shortName evidence="1">L11 Mtase</shortName>
        <ecNumber evidence="1">2.1.1.-</ecNumber>
    </recommendedName>
</protein>
<name>PRMA_CLOBH</name>
<accession>A5I638</accession>
<accession>A7G7C1</accession>
<dbReference type="EC" id="2.1.1.-" evidence="1"/>
<dbReference type="EMBL" id="CP000727">
    <property type="protein sequence ID" value="ABS36519.1"/>
    <property type="molecule type" value="Genomic_DNA"/>
</dbReference>
<dbReference type="EMBL" id="AM412317">
    <property type="protein sequence ID" value="CAL84520.1"/>
    <property type="molecule type" value="Genomic_DNA"/>
</dbReference>
<dbReference type="RefSeq" id="WP_003385115.1">
    <property type="nucleotide sequence ID" value="NC_009698.1"/>
</dbReference>
<dbReference type="RefSeq" id="YP_001255450.1">
    <property type="nucleotide sequence ID" value="NC_009495.1"/>
</dbReference>
<dbReference type="RefSeq" id="YP_001388686.1">
    <property type="nucleotide sequence ID" value="NC_009698.1"/>
</dbReference>
<dbReference type="SMR" id="A5I638"/>
<dbReference type="GeneID" id="5187946"/>
<dbReference type="KEGG" id="cbh:CLC_2853"/>
<dbReference type="KEGG" id="cbo:CBO2957"/>
<dbReference type="PATRIC" id="fig|413999.7.peg.2936"/>
<dbReference type="HOGENOM" id="CLU_049382_0_1_9"/>
<dbReference type="PRO" id="PR:A5I638"/>
<dbReference type="Proteomes" id="UP000001986">
    <property type="component" value="Chromosome"/>
</dbReference>
<dbReference type="GO" id="GO:0005737">
    <property type="term" value="C:cytoplasm"/>
    <property type="evidence" value="ECO:0007669"/>
    <property type="project" value="UniProtKB-SubCell"/>
</dbReference>
<dbReference type="GO" id="GO:0008276">
    <property type="term" value="F:protein methyltransferase activity"/>
    <property type="evidence" value="ECO:0000318"/>
    <property type="project" value="GO_Central"/>
</dbReference>
<dbReference type="GO" id="GO:0016279">
    <property type="term" value="F:protein-lysine N-methyltransferase activity"/>
    <property type="evidence" value="ECO:0007669"/>
    <property type="project" value="RHEA"/>
</dbReference>
<dbReference type="GO" id="GO:0032259">
    <property type="term" value="P:methylation"/>
    <property type="evidence" value="ECO:0007669"/>
    <property type="project" value="UniProtKB-KW"/>
</dbReference>
<dbReference type="CDD" id="cd02440">
    <property type="entry name" value="AdoMet_MTases"/>
    <property type="match status" value="1"/>
</dbReference>
<dbReference type="Gene3D" id="3.40.50.150">
    <property type="entry name" value="Vaccinia Virus protein VP39"/>
    <property type="match status" value="1"/>
</dbReference>
<dbReference type="HAMAP" id="MF_00735">
    <property type="entry name" value="Methyltr_PrmA"/>
    <property type="match status" value="1"/>
</dbReference>
<dbReference type="InterPro" id="IPR050078">
    <property type="entry name" value="Ribosomal_L11_MeTrfase_PrmA"/>
</dbReference>
<dbReference type="InterPro" id="IPR004498">
    <property type="entry name" value="Ribosomal_PrmA_MeTrfase"/>
</dbReference>
<dbReference type="InterPro" id="IPR029063">
    <property type="entry name" value="SAM-dependent_MTases_sf"/>
</dbReference>
<dbReference type="NCBIfam" id="TIGR00406">
    <property type="entry name" value="prmA"/>
    <property type="match status" value="1"/>
</dbReference>
<dbReference type="PANTHER" id="PTHR43648">
    <property type="entry name" value="ELECTRON TRANSFER FLAVOPROTEIN BETA SUBUNIT LYSINE METHYLTRANSFERASE"/>
    <property type="match status" value="1"/>
</dbReference>
<dbReference type="PANTHER" id="PTHR43648:SF1">
    <property type="entry name" value="ELECTRON TRANSFER FLAVOPROTEIN BETA SUBUNIT LYSINE METHYLTRANSFERASE"/>
    <property type="match status" value="1"/>
</dbReference>
<dbReference type="Pfam" id="PF06325">
    <property type="entry name" value="PrmA"/>
    <property type="match status" value="1"/>
</dbReference>
<dbReference type="PIRSF" id="PIRSF000401">
    <property type="entry name" value="RPL11_MTase"/>
    <property type="match status" value="1"/>
</dbReference>
<dbReference type="SUPFAM" id="SSF53335">
    <property type="entry name" value="S-adenosyl-L-methionine-dependent methyltransferases"/>
    <property type="match status" value="1"/>
</dbReference>
<reference key="1">
    <citation type="journal article" date="2007" name="Genome Res.">
        <title>Genome sequence of a proteolytic (Group I) Clostridium botulinum strain Hall A and comparative analysis of the clostridial genomes.</title>
        <authorList>
            <person name="Sebaihia M."/>
            <person name="Peck M.W."/>
            <person name="Minton N.P."/>
            <person name="Thomson N.R."/>
            <person name="Holden M.T.G."/>
            <person name="Mitchell W.J."/>
            <person name="Carter A.T."/>
            <person name="Bentley S.D."/>
            <person name="Mason D.R."/>
            <person name="Crossman L."/>
            <person name="Paul C.J."/>
            <person name="Ivens A."/>
            <person name="Wells-Bennik M.H.J."/>
            <person name="Davis I.J."/>
            <person name="Cerdeno-Tarraga A.M."/>
            <person name="Churcher C."/>
            <person name="Quail M.A."/>
            <person name="Chillingworth T."/>
            <person name="Feltwell T."/>
            <person name="Fraser A."/>
            <person name="Goodhead I."/>
            <person name="Hance Z."/>
            <person name="Jagels K."/>
            <person name="Larke N."/>
            <person name="Maddison M."/>
            <person name="Moule S."/>
            <person name="Mungall K."/>
            <person name="Norbertczak H."/>
            <person name="Rabbinowitsch E."/>
            <person name="Sanders M."/>
            <person name="Simmonds M."/>
            <person name="White B."/>
            <person name="Whithead S."/>
            <person name="Parkhill J."/>
        </authorList>
    </citation>
    <scope>NUCLEOTIDE SEQUENCE [LARGE SCALE GENOMIC DNA]</scope>
    <source>
        <strain>Hall / ATCC 3502 / NCTC 13319 / Type A</strain>
    </source>
</reference>
<reference key="2">
    <citation type="journal article" date="2007" name="PLoS ONE">
        <title>Analysis of the neurotoxin complex genes in Clostridium botulinum A1-A4 and B1 strains: BoNT/A3, /Ba4 and /B1 clusters are located within plasmids.</title>
        <authorList>
            <person name="Smith T.J."/>
            <person name="Hill K.K."/>
            <person name="Foley B.T."/>
            <person name="Detter J.C."/>
            <person name="Munk A.C."/>
            <person name="Bruce D.C."/>
            <person name="Doggett N.A."/>
            <person name="Smith L.A."/>
            <person name="Marks J.D."/>
            <person name="Xie G."/>
            <person name="Brettin T.S."/>
        </authorList>
    </citation>
    <scope>NUCLEOTIDE SEQUENCE [LARGE SCALE GENOMIC DNA]</scope>
    <source>
        <strain>Hall / ATCC 3502 / NCTC 13319 / Type A</strain>
    </source>
</reference>